<comment type="catalytic activity">
    <reaction evidence="1">
        <text>L-histidinol phosphate + 2-oxoglutarate = 3-(imidazol-4-yl)-2-oxopropyl phosphate + L-glutamate</text>
        <dbReference type="Rhea" id="RHEA:23744"/>
        <dbReference type="ChEBI" id="CHEBI:16810"/>
        <dbReference type="ChEBI" id="CHEBI:29985"/>
        <dbReference type="ChEBI" id="CHEBI:57766"/>
        <dbReference type="ChEBI" id="CHEBI:57980"/>
        <dbReference type="EC" id="2.6.1.9"/>
    </reaction>
</comment>
<comment type="cofactor">
    <cofactor evidence="1">
        <name>pyridoxal 5'-phosphate</name>
        <dbReference type="ChEBI" id="CHEBI:597326"/>
    </cofactor>
</comment>
<comment type="pathway">
    <text evidence="1">Amino-acid biosynthesis; L-histidine biosynthesis; L-histidine from 5-phospho-alpha-D-ribose 1-diphosphate: step 7/9.</text>
</comment>
<comment type="similarity">
    <text evidence="1">Belongs to the class-II pyridoxal-phosphate-dependent aminotransferase family. Histidinol-phosphate aminotransferase subfamily.</text>
</comment>
<feature type="chain" id="PRO_0000153497" description="Histidinol-phosphate aminotransferase">
    <location>
        <begin position="1"/>
        <end position="391"/>
    </location>
</feature>
<feature type="modified residue" description="N6-(pyridoxal phosphate)lysine" evidence="1">
    <location>
        <position position="246"/>
    </location>
</feature>
<proteinExistence type="inferred from homology"/>
<reference key="1">
    <citation type="journal article" date="2002" name="Proc. Natl. Acad. Sci. U.S.A.">
        <title>The complete genome of hyperthermophile Methanopyrus kandleri AV19 and monophyly of archaeal methanogens.</title>
        <authorList>
            <person name="Slesarev A.I."/>
            <person name="Mezhevaya K.V."/>
            <person name="Makarova K.S."/>
            <person name="Polushin N.N."/>
            <person name="Shcherbinina O.V."/>
            <person name="Shakhova V.V."/>
            <person name="Belova G.I."/>
            <person name="Aravind L."/>
            <person name="Natale D.A."/>
            <person name="Rogozin I.B."/>
            <person name="Tatusov R.L."/>
            <person name="Wolf Y.I."/>
            <person name="Stetter K.O."/>
            <person name="Malykh A.G."/>
            <person name="Koonin E.V."/>
            <person name="Kozyavkin S.A."/>
        </authorList>
    </citation>
    <scope>NUCLEOTIDE SEQUENCE [LARGE SCALE GENOMIC DNA]</scope>
    <source>
        <strain>AV19 / DSM 6324 / JCM 9639 / NBRC 100938</strain>
    </source>
</reference>
<gene>
    <name evidence="1" type="primary">hisC</name>
    <name type="ordered locus">MK1426</name>
</gene>
<accession>Q8TVG3</accession>
<evidence type="ECO:0000255" key="1">
    <source>
        <dbReference type="HAMAP-Rule" id="MF_01023"/>
    </source>
</evidence>
<keyword id="KW-0028">Amino-acid biosynthesis</keyword>
<keyword id="KW-0032">Aminotransferase</keyword>
<keyword id="KW-0368">Histidine biosynthesis</keyword>
<keyword id="KW-0663">Pyridoxal phosphate</keyword>
<keyword id="KW-1185">Reference proteome</keyword>
<keyword id="KW-0808">Transferase</keyword>
<sequence>MDRVRPLAGGRNVRIREAVLNIDPYVPGKSKEEIAREYGIEPDEIVKLGSNENPLGPSPKAVKAAKRELERLHEYPEPLAPPSLYEAIIDYLADPPYPAGEPVEITREHLVVGGDGADEIIDVLTRVLVDPGDPVVIPVPTFSQYGISARACGAEVRKPRFDPERGFELDEDSLFEALDREVRLVYLCTPNNPTGNRIRERVVRDVVEECRGVVLIDHAYVEFADHDYTPLALEYDNVLVLRTCSKALGLAGARVGYGIANPELIEHLHRIKPVFSLTRPSAAAAEATFRDRDYIEKSVRLMIESRKYLYRELRKLDRLTPFPSEANYLLVDVSNTGMNASEFTEELLKRGVIVRDCSSFEGIEPFYVRVSTGTLEEDRKFIEVVKDVLEV</sequence>
<protein>
    <recommendedName>
        <fullName evidence="1">Histidinol-phosphate aminotransferase</fullName>
        <ecNumber evidence="1">2.6.1.9</ecNumber>
    </recommendedName>
    <alternativeName>
        <fullName evidence="1">Imidazole acetol-phosphate transaminase</fullName>
    </alternativeName>
</protein>
<dbReference type="EC" id="2.6.1.9" evidence="1"/>
<dbReference type="EMBL" id="AE009439">
    <property type="protein sequence ID" value="AAM02639.1"/>
    <property type="molecule type" value="Genomic_DNA"/>
</dbReference>
<dbReference type="RefSeq" id="WP_011019794.1">
    <property type="nucleotide sequence ID" value="NC_003551.1"/>
</dbReference>
<dbReference type="SMR" id="Q8TVG3"/>
<dbReference type="FunCoup" id="Q8TVG3">
    <property type="interactions" value="91"/>
</dbReference>
<dbReference type="STRING" id="190192.MK1426"/>
<dbReference type="PaxDb" id="190192-MK1426"/>
<dbReference type="EnsemblBacteria" id="AAM02639">
    <property type="protein sequence ID" value="AAM02639"/>
    <property type="gene ID" value="MK1426"/>
</dbReference>
<dbReference type="GeneID" id="1478021"/>
<dbReference type="KEGG" id="mka:MK1426"/>
<dbReference type="HOGENOM" id="CLU_017584_3_1_2"/>
<dbReference type="InParanoid" id="Q8TVG3"/>
<dbReference type="UniPathway" id="UPA00031">
    <property type="reaction ID" value="UER00012"/>
</dbReference>
<dbReference type="Proteomes" id="UP000001826">
    <property type="component" value="Chromosome"/>
</dbReference>
<dbReference type="GO" id="GO:0004400">
    <property type="term" value="F:histidinol-phosphate transaminase activity"/>
    <property type="evidence" value="ECO:0007669"/>
    <property type="project" value="UniProtKB-UniRule"/>
</dbReference>
<dbReference type="GO" id="GO:0030170">
    <property type="term" value="F:pyridoxal phosphate binding"/>
    <property type="evidence" value="ECO:0007669"/>
    <property type="project" value="InterPro"/>
</dbReference>
<dbReference type="GO" id="GO:0000105">
    <property type="term" value="P:L-histidine biosynthetic process"/>
    <property type="evidence" value="ECO:0007669"/>
    <property type="project" value="UniProtKB-UniRule"/>
</dbReference>
<dbReference type="CDD" id="cd00609">
    <property type="entry name" value="AAT_like"/>
    <property type="match status" value="1"/>
</dbReference>
<dbReference type="Gene3D" id="3.90.1150.10">
    <property type="entry name" value="Aspartate Aminotransferase, domain 1"/>
    <property type="match status" value="1"/>
</dbReference>
<dbReference type="Gene3D" id="3.40.640.10">
    <property type="entry name" value="Type I PLP-dependent aspartate aminotransferase-like (Major domain)"/>
    <property type="match status" value="1"/>
</dbReference>
<dbReference type="HAMAP" id="MF_01023">
    <property type="entry name" value="HisC_aminotrans_2"/>
    <property type="match status" value="1"/>
</dbReference>
<dbReference type="InterPro" id="IPR004839">
    <property type="entry name" value="Aminotransferase_I/II_large"/>
</dbReference>
<dbReference type="InterPro" id="IPR005861">
    <property type="entry name" value="HisP_aminotrans"/>
</dbReference>
<dbReference type="InterPro" id="IPR015424">
    <property type="entry name" value="PyrdxlP-dep_Trfase"/>
</dbReference>
<dbReference type="InterPro" id="IPR015421">
    <property type="entry name" value="PyrdxlP-dep_Trfase_major"/>
</dbReference>
<dbReference type="InterPro" id="IPR015422">
    <property type="entry name" value="PyrdxlP-dep_Trfase_small"/>
</dbReference>
<dbReference type="NCBIfam" id="TIGR01141">
    <property type="entry name" value="hisC"/>
    <property type="match status" value="1"/>
</dbReference>
<dbReference type="PANTHER" id="PTHR42885:SF2">
    <property type="entry name" value="HISTIDINOL-PHOSPHATE AMINOTRANSFERASE"/>
    <property type="match status" value="1"/>
</dbReference>
<dbReference type="PANTHER" id="PTHR42885">
    <property type="entry name" value="HISTIDINOL-PHOSPHATE AMINOTRANSFERASE-RELATED"/>
    <property type="match status" value="1"/>
</dbReference>
<dbReference type="Pfam" id="PF00155">
    <property type="entry name" value="Aminotran_1_2"/>
    <property type="match status" value="1"/>
</dbReference>
<dbReference type="SUPFAM" id="SSF53383">
    <property type="entry name" value="PLP-dependent transferases"/>
    <property type="match status" value="1"/>
</dbReference>
<organism>
    <name type="scientific">Methanopyrus kandleri (strain AV19 / DSM 6324 / JCM 9639 / NBRC 100938)</name>
    <dbReference type="NCBI Taxonomy" id="190192"/>
    <lineage>
        <taxon>Archaea</taxon>
        <taxon>Methanobacteriati</taxon>
        <taxon>Methanobacteriota</taxon>
        <taxon>Methanomada group</taxon>
        <taxon>Methanopyri</taxon>
        <taxon>Methanopyrales</taxon>
        <taxon>Methanopyraceae</taxon>
        <taxon>Methanopyrus</taxon>
    </lineage>
</organism>
<name>HIS8_METKA</name>